<name>TYRP3_TYRPU</name>
<proteinExistence type="evidence at protein level"/>
<keyword id="KW-0020">Allergen</keyword>
<keyword id="KW-0903">Direct protein sequencing</keyword>
<keyword id="KW-1015">Disulfide bond</keyword>
<keyword id="KW-0378">Hydrolase</keyword>
<keyword id="KW-0645">Protease</keyword>
<keyword id="KW-0964">Secreted</keyword>
<keyword id="KW-0720">Serine protease</keyword>
<keyword id="KW-0732">Signal</keyword>
<keyword id="KW-0865">Zymogen</keyword>
<dbReference type="EC" id="3.4.21.4" evidence="3"/>
<dbReference type="EMBL" id="EU302595">
    <property type="protein sequence ID" value="ABZ81991.1"/>
    <property type="molecule type" value="mRNA"/>
</dbReference>
<dbReference type="SMR" id="C6ZDB5"/>
<dbReference type="Allergome" id="3903">
    <property type="allergen name" value="Tyr p 3"/>
</dbReference>
<dbReference type="Allergome" id="9493">
    <property type="allergen name" value="Tyr p 3.0101"/>
</dbReference>
<dbReference type="MEROPS" id="S01.234"/>
<dbReference type="GO" id="GO:0005576">
    <property type="term" value="C:extracellular region"/>
    <property type="evidence" value="ECO:0000314"/>
    <property type="project" value="UniProtKB"/>
</dbReference>
<dbReference type="GO" id="GO:0004252">
    <property type="term" value="F:serine-type endopeptidase activity"/>
    <property type="evidence" value="ECO:0000314"/>
    <property type="project" value="UniProtKB"/>
</dbReference>
<dbReference type="GO" id="GO:0006508">
    <property type="term" value="P:proteolysis"/>
    <property type="evidence" value="ECO:0000314"/>
    <property type="project" value="UniProtKB"/>
</dbReference>
<dbReference type="CDD" id="cd00190">
    <property type="entry name" value="Tryp_SPc"/>
    <property type="match status" value="1"/>
</dbReference>
<dbReference type="FunFam" id="2.40.10.10:FF:000077">
    <property type="entry name" value="Predicted protein"/>
    <property type="match status" value="1"/>
</dbReference>
<dbReference type="Gene3D" id="2.40.10.10">
    <property type="entry name" value="Trypsin-like serine proteases"/>
    <property type="match status" value="1"/>
</dbReference>
<dbReference type="InterPro" id="IPR050430">
    <property type="entry name" value="Peptidase_S1"/>
</dbReference>
<dbReference type="InterPro" id="IPR009003">
    <property type="entry name" value="Peptidase_S1_PA"/>
</dbReference>
<dbReference type="InterPro" id="IPR043504">
    <property type="entry name" value="Peptidase_S1_PA_chymotrypsin"/>
</dbReference>
<dbReference type="InterPro" id="IPR001314">
    <property type="entry name" value="Peptidase_S1A"/>
</dbReference>
<dbReference type="InterPro" id="IPR001254">
    <property type="entry name" value="Trypsin_dom"/>
</dbReference>
<dbReference type="InterPro" id="IPR018114">
    <property type="entry name" value="TRYPSIN_HIS"/>
</dbReference>
<dbReference type="PANTHER" id="PTHR24276:SF98">
    <property type="entry name" value="FI18310P1-RELATED"/>
    <property type="match status" value="1"/>
</dbReference>
<dbReference type="PANTHER" id="PTHR24276">
    <property type="entry name" value="POLYSERASE-RELATED"/>
    <property type="match status" value="1"/>
</dbReference>
<dbReference type="Pfam" id="PF00089">
    <property type="entry name" value="Trypsin"/>
    <property type="match status" value="1"/>
</dbReference>
<dbReference type="PRINTS" id="PR00722">
    <property type="entry name" value="CHYMOTRYPSIN"/>
</dbReference>
<dbReference type="SMART" id="SM00020">
    <property type="entry name" value="Tryp_SPc"/>
    <property type="match status" value="1"/>
</dbReference>
<dbReference type="SUPFAM" id="SSF50494">
    <property type="entry name" value="Trypsin-like serine proteases"/>
    <property type="match status" value="1"/>
</dbReference>
<dbReference type="PROSITE" id="PS50240">
    <property type="entry name" value="TRYPSIN_DOM"/>
    <property type="match status" value="1"/>
</dbReference>
<dbReference type="PROSITE" id="PS00134">
    <property type="entry name" value="TRYPSIN_HIS"/>
    <property type="match status" value="1"/>
</dbReference>
<evidence type="ECO:0000255" key="1"/>
<evidence type="ECO:0000255" key="2">
    <source>
        <dbReference type="PROSITE-ProRule" id="PRU00274"/>
    </source>
</evidence>
<evidence type="ECO:0000269" key="3">
    <source>
    </source>
</evidence>
<evidence type="ECO:0000269" key="4">
    <source>
    </source>
</evidence>
<evidence type="ECO:0000269" key="5">
    <source>
    </source>
</evidence>
<evidence type="ECO:0000303" key="6">
    <source>
    </source>
</evidence>
<evidence type="ECO:0000305" key="7"/>
<evidence type="ECO:0000305" key="8">
    <source>
    </source>
</evidence>
<evidence type="ECO:0000312" key="9">
    <source>
        <dbReference type="EMBL" id="ABZ81991.1"/>
    </source>
</evidence>
<accession>C6ZDB5</accession>
<comment type="function">
    <text evidence="3">Digests TAMe (p-toluene arginine methyl ester), but not ethyl N-benzoyl-L-tyrosinate (BTEE).</text>
</comment>
<comment type="catalytic activity">
    <reaction evidence="3">
        <text>Preferential cleavage: Arg-|-Xaa, Lys-|-Xaa.</text>
        <dbReference type="EC" id="3.4.21.4"/>
    </reaction>
</comment>
<comment type="activity regulation">
    <text evidence="3">Inhibited by the serine protease inhibitor phenylmethylsulfonyl, and trypsin inhibitors soybean trypsin inhibitor and tosyllysine chloromethyl ketone. Not inhibited by dithiothreitol, a cysteine protease inhibitor.</text>
</comment>
<comment type="subcellular location">
    <subcellularLocation>
        <location evidence="3">Secreted</location>
    </subcellularLocation>
</comment>
<comment type="allergen">
    <text evidence="3 4 5">Causes an allergic reaction in human. Binds to IgE of patients allergic to storage mite T.putrescentiae (PubMed:19339798, PubMed:20197679, PubMed:20683648). Binds to IgE in 58% of the 110 patients tested (PubMed:19339798). Binds to IgE in 50% of the 44 elderly patients (aged 70-90) tested (PubMed:20197679). Binds to IgE in 45% of the 22 young adult rhinitis patients tested allergic to mites (both T.putrescentiae and D.pteronyssinus). This protein might be a T.putrescentiae specific allergen since it cannot be absorbed by group 3 allergen (Der p 3) of D.pteronyssinus in the IgE immunoblot inhibition assay (PubMed:20683648). Is able to induce histamine release from human basophils (PubMed:19339798).</text>
</comment>
<comment type="similarity">
    <text evidence="7">Belongs to the peptidase S1 family.</text>
</comment>
<protein>
    <recommendedName>
        <fullName evidence="7">Trypsin Tyr p 3.0101</fullName>
        <ecNumber evidence="3">3.4.21.4</ecNumber>
    </recommendedName>
    <alternativeName>
        <fullName evidence="6">Mite group 3 allergen Tyr p 3</fullName>
    </alternativeName>
    <allergenName evidence="7">Tyr p 3.0101</allergenName>
</protein>
<feature type="signal peptide" evidence="1">
    <location>
        <begin position="1"/>
        <end position="16"/>
    </location>
</feature>
<feature type="propeptide" id="PRO_0000448081" evidence="1 8">
    <location>
        <begin position="17"/>
        <end position="33"/>
    </location>
</feature>
<feature type="chain" id="PRO_5002974670" description="Trypsin Tyr p 3.0101" evidence="8">
    <location>
        <begin position="34"/>
        <end position="285"/>
    </location>
</feature>
<feature type="domain" description="Peptidase S1" evidence="2">
    <location>
        <begin position="34"/>
        <end position="262"/>
    </location>
</feature>
<feature type="active site" description="Charge relay system" evidence="2">
    <location>
        <position position="73"/>
    </location>
</feature>
<feature type="active site" description="Charge relay system" evidence="2">
    <location>
        <position position="120"/>
    </location>
</feature>
<feature type="active site" description="Charge relay system" evidence="2">
    <location>
        <position position="218"/>
    </location>
</feature>
<feature type="site" description="Required for specificity" evidence="7">
    <location>
        <position position="212"/>
    </location>
</feature>
<feature type="disulfide bond" evidence="2">
    <location>
        <begin position="58"/>
        <end position="74"/>
    </location>
</feature>
<feature type="disulfide bond" evidence="2">
    <location>
        <begin position="186"/>
        <end position="202"/>
    </location>
</feature>
<feature type="disulfide bond" evidence="2">
    <location>
        <begin position="214"/>
        <end position="238"/>
    </location>
</feature>
<organism evidence="9">
    <name type="scientific">Tyrophagus putrescentiae</name>
    <name type="common">Mold mite</name>
    <name type="synonym">Acarus putrescentiae</name>
    <dbReference type="NCBI Taxonomy" id="59818"/>
    <lineage>
        <taxon>Eukaryota</taxon>
        <taxon>Metazoa</taxon>
        <taxon>Ecdysozoa</taxon>
        <taxon>Arthropoda</taxon>
        <taxon>Chelicerata</taxon>
        <taxon>Arachnida</taxon>
        <taxon>Acari</taxon>
        <taxon>Acariformes</taxon>
        <taxon>Sarcoptiformes</taxon>
        <taxon>Astigmata</taxon>
        <taxon>Acaroidea</taxon>
        <taxon>Acaridae</taxon>
        <taxon>Tyrophaginae</taxon>
        <taxon>Tyrophagus</taxon>
    </lineage>
</organism>
<sequence length="285" mass="30177">MKILLFLCFLVSVAFAKPPTIQLKSNTKSQNGFIVGGTEAVDGDAPHQVSLQHTSHFCGGSIISERWILTAAHCIDADDLSNPGGMSVRYNTLNLKSGTLVKVKSIKVHEQYSNVTSDNDIALLETVASMNLNQTNAVAAKLPAKGNDPQDGDLFLSGWGTLHSGDTTIPTNLQKVTVPLTNRSVCAEAYTGIVNITENMFCAGKMGIGGVDSCQGDSGGGAMLNKELVGVVSFGVGCGDPKYPGVYTRVSQYLDWIELSAKSSATTLVAVNITLFLTLFIGAIW</sequence>
<reference evidence="9" key="1">
    <citation type="journal article" date="2009" name="Int. Arch. Allergy Immunol.">
        <title>Immunologic characterization and allergenicity of recombinant Tyr p 3 allergen from the storage mite Tyrophagus putrescentiae.</title>
        <authorList>
            <person name="Liao E.C."/>
            <person name="Hsu E.L."/>
            <person name="Tsai J.J."/>
            <person name="Ho C.M."/>
        </authorList>
    </citation>
    <scope>NUCLEOTIDE SEQUENCE [MRNA]</scope>
    <scope>PROTEIN SEQUENCE OF 34-41</scope>
    <scope>FUNCTION</scope>
    <scope>CATALYTIC ACTIVITY</scope>
    <scope>ACTIVITY REGULATION</scope>
    <scope>SUBCELLULAR LOCATION</scope>
    <scope>ALLERGEN</scope>
</reference>
<reference key="2">
    <citation type="journal article" date="2010" name="Int. Arch. Allergy Immunol.">
        <title>Prevalence of Tyrophagus putrescentiae hypersensitivity in subjects over 70 years of age in a veterans' nursing home in Taiwan.</title>
        <authorList>
            <person name="Liao E.C."/>
            <person name="Ho C.M."/>
            <person name="Tsai J.J."/>
        </authorList>
    </citation>
    <scope>ALLERGEN</scope>
</reference>
<reference key="3">
    <citation type="journal article" date="2010" name="J. Clin. Immunol.">
        <title>Dermatophagoides pteronyssinus and Tyrophagus putrescentiae allergy in allergic rhinitis caused by cross-reactivity not dual-sensitization.</title>
        <authorList>
            <person name="Liao E.C."/>
            <person name="Ho C.M."/>
            <person name="Lin M.Y."/>
            <person name="Tsai J.J."/>
        </authorList>
    </citation>
    <scope>ALLERGEN</scope>
</reference>